<feature type="chain" id="PRO_0000427956" description="3-methyl-2-oxobutanoate dehydrogenase subunit beta">
    <location>
        <begin position="1"/>
        <end position="348"/>
    </location>
</feature>
<feature type="active site" description="Proton acceptor" evidence="1">
    <location>
        <position position="151"/>
    </location>
</feature>
<feature type="binding site" evidence="1">
    <location>
        <position position="51"/>
    </location>
    <ligand>
        <name>thiamine diphosphate</name>
        <dbReference type="ChEBI" id="CHEBI:58937"/>
    </ligand>
</feature>
<feature type="binding site" evidence="1">
    <location>
        <begin position="80"/>
        <end position="82"/>
    </location>
    <ligand>
        <name>thiamine diphosphate</name>
        <dbReference type="ChEBI" id="CHEBI:58937"/>
    </ligand>
</feature>
<feature type="binding site" evidence="1">
    <location>
        <position position="104"/>
    </location>
    <ligand>
        <name>thiamine diphosphate</name>
        <dbReference type="ChEBI" id="CHEBI:58937"/>
    </ligand>
</feature>
<feature type="binding site" evidence="1">
    <location>
        <begin position="105"/>
        <end position="108"/>
    </location>
    <ligand>
        <name>substrate</name>
    </ligand>
</feature>
<feature type="binding site" evidence="1">
    <location>
        <begin position="108"/>
        <end position="111"/>
    </location>
    <ligand>
        <name>thiamine diphosphate</name>
        <dbReference type="ChEBI" id="CHEBI:58937"/>
    </ligand>
</feature>
<feature type="binding site" evidence="1">
    <location>
        <position position="151"/>
    </location>
    <ligand>
        <name>substrate</name>
    </ligand>
</feature>
<organism>
    <name type="scientific">Mycobacterium tuberculosis (strain CDC 1551 / Oshkosh)</name>
    <dbReference type="NCBI Taxonomy" id="83331"/>
    <lineage>
        <taxon>Bacteria</taxon>
        <taxon>Bacillati</taxon>
        <taxon>Actinomycetota</taxon>
        <taxon>Actinomycetes</taxon>
        <taxon>Mycobacteriales</taxon>
        <taxon>Mycobacteriaceae</taxon>
        <taxon>Mycobacterium</taxon>
        <taxon>Mycobacterium tuberculosis complex</taxon>
    </lineage>
</organism>
<comment type="function">
    <text evidence="1">Component of the branched-chain alpha-ketoacid dehydrogenase (BCKADH) complex, that catalyzes the overall conversion of branched-chain alpha-ketoacids to acyl-CoA and CO(2).</text>
</comment>
<comment type="catalytic activity">
    <reaction>
        <text>N(6)-[(R)-lipoyl]-L-lysyl-[protein] + 3-methyl-2-oxobutanoate + H(+) = N(6)-[(R)-S(8)-2-methylpropanoyldihydrolipoyl]-L-lysyl-[protein] + CO2</text>
        <dbReference type="Rhea" id="RHEA:13457"/>
        <dbReference type="Rhea" id="RHEA-COMP:10474"/>
        <dbReference type="Rhea" id="RHEA-COMP:10497"/>
        <dbReference type="ChEBI" id="CHEBI:11851"/>
        <dbReference type="ChEBI" id="CHEBI:15378"/>
        <dbReference type="ChEBI" id="CHEBI:16526"/>
        <dbReference type="ChEBI" id="CHEBI:83099"/>
        <dbReference type="ChEBI" id="CHEBI:83142"/>
        <dbReference type="EC" id="1.2.4.4"/>
    </reaction>
</comment>
<comment type="cofactor">
    <cofactor evidence="1">
        <name>thiamine diphosphate</name>
        <dbReference type="ChEBI" id="CHEBI:58937"/>
    </cofactor>
</comment>
<comment type="subunit">
    <text evidence="1">Heteromer of E1 alpha (BkdA) and beta (BkdB) subunits. Part of the BCKADH complex, consisting of multiple copies of BkdA/BkdB (E1), BkdC (E2) and Lpd (E3) (By similarity).</text>
</comment>
<protein>
    <recommendedName>
        <fullName>3-methyl-2-oxobutanoate dehydrogenase subunit beta</fullName>
        <ecNumber>1.2.4.4</ecNumber>
    </recommendedName>
    <alternativeName>
        <fullName>Branched-chain alpha-ketoacid dehydrogenase E1 component subunit beta</fullName>
        <shortName>BCKADH E1-beta</shortName>
    </alternativeName>
</protein>
<dbReference type="EC" id="1.2.4.4"/>
<dbReference type="EMBL" id="AE000516">
    <property type="protein sequence ID" value="AAK46875.1"/>
    <property type="molecule type" value="Genomic_DNA"/>
</dbReference>
<dbReference type="PIR" id="H70549">
    <property type="entry name" value="H70549"/>
</dbReference>
<dbReference type="RefSeq" id="WP_003412757.1">
    <property type="nucleotide sequence ID" value="NZ_KK341227.1"/>
</dbReference>
<dbReference type="SMR" id="P9WIS0"/>
<dbReference type="GeneID" id="45426490"/>
<dbReference type="KEGG" id="mtc:MT2571"/>
<dbReference type="PATRIC" id="fig|83331.31.peg.2773"/>
<dbReference type="HOGENOM" id="CLU_012907_1_0_11"/>
<dbReference type="Proteomes" id="UP000001020">
    <property type="component" value="Chromosome"/>
</dbReference>
<dbReference type="GO" id="GO:0003863">
    <property type="term" value="F:3-methyl-2-oxobutanoate dehydrogenase (2-methylpropanoyl-transferring) activity"/>
    <property type="evidence" value="ECO:0007669"/>
    <property type="project" value="UniProtKB-EC"/>
</dbReference>
<dbReference type="GO" id="GO:0000287">
    <property type="term" value="F:magnesium ion binding"/>
    <property type="evidence" value="ECO:0007669"/>
    <property type="project" value="UniProtKB-ARBA"/>
</dbReference>
<dbReference type="GO" id="GO:0009083">
    <property type="term" value="P:branched-chain amino acid catabolic process"/>
    <property type="evidence" value="ECO:0007669"/>
    <property type="project" value="TreeGrafter"/>
</dbReference>
<dbReference type="GO" id="GO:0007584">
    <property type="term" value="P:response to nutrient"/>
    <property type="evidence" value="ECO:0007669"/>
    <property type="project" value="TreeGrafter"/>
</dbReference>
<dbReference type="CDD" id="cd07036">
    <property type="entry name" value="TPP_PYR_E1-PDHc-beta_like"/>
    <property type="match status" value="1"/>
</dbReference>
<dbReference type="FunFam" id="3.40.50.920:FF:000001">
    <property type="entry name" value="Pyruvate dehydrogenase E1 beta subunit"/>
    <property type="match status" value="1"/>
</dbReference>
<dbReference type="FunFam" id="3.40.50.970:FF:000001">
    <property type="entry name" value="Pyruvate dehydrogenase E1 beta subunit"/>
    <property type="match status" value="1"/>
</dbReference>
<dbReference type="Gene3D" id="3.40.50.920">
    <property type="match status" value="1"/>
</dbReference>
<dbReference type="Gene3D" id="3.40.50.970">
    <property type="match status" value="1"/>
</dbReference>
<dbReference type="InterPro" id="IPR029061">
    <property type="entry name" value="THDP-binding"/>
</dbReference>
<dbReference type="InterPro" id="IPR009014">
    <property type="entry name" value="Transketo_C/PFOR_II"/>
</dbReference>
<dbReference type="InterPro" id="IPR005475">
    <property type="entry name" value="Transketolase-like_Pyr-bd"/>
</dbReference>
<dbReference type="InterPro" id="IPR033248">
    <property type="entry name" value="Transketolase_C"/>
</dbReference>
<dbReference type="PANTHER" id="PTHR42980:SF1">
    <property type="entry name" value="2-OXOISOVALERATE DEHYDROGENASE SUBUNIT BETA, MITOCHONDRIAL"/>
    <property type="match status" value="1"/>
</dbReference>
<dbReference type="PANTHER" id="PTHR42980">
    <property type="entry name" value="2-OXOISOVALERATE DEHYDROGENASE SUBUNIT BETA-RELATED"/>
    <property type="match status" value="1"/>
</dbReference>
<dbReference type="Pfam" id="PF02779">
    <property type="entry name" value="Transket_pyr"/>
    <property type="match status" value="1"/>
</dbReference>
<dbReference type="Pfam" id="PF02780">
    <property type="entry name" value="Transketolase_C"/>
    <property type="match status" value="1"/>
</dbReference>
<dbReference type="SMART" id="SM00861">
    <property type="entry name" value="Transket_pyr"/>
    <property type="match status" value="1"/>
</dbReference>
<dbReference type="SUPFAM" id="SSF52518">
    <property type="entry name" value="Thiamin diphosphate-binding fold (THDP-binding)"/>
    <property type="match status" value="1"/>
</dbReference>
<dbReference type="SUPFAM" id="SSF52922">
    <property type="entry name" value="TK C-terminal domain-like"/>
    <property type="match status" value="1"/>
</dbReference>
<evidence type="ECO:0000250" key="1"/>
<keyword id="KW-0560">Oxidoreductase</keyword>
<keyword id="KW-1185">Reference proteome</keyword>
<keyword id="KW-0786">Thiamine pyrophosphate</keyword>
<sequence>MTQIADRPARPDETLAVAVSDITQSLTMVQAINRALYDAMAADERVLVFGEDVAVEGGVFRVTEGLADTFGADRCFDTPLAESAIIGIAVGLALRGFVPVPEIQFDGFSYPAFDQVVSHLAKYRTRTRGEVDMPVTVRIPSFGGIGAAEHHSDSTESYWVHTAGLKVVVPSTPGDAYWLLRHAIACPDPVMYLEPKRRYHGRGMVDTSRPEPPIGHAMVRRSGTDVTVVTYGNLVSTALSSADTAEQQHDWSLEVIDLRSLAPLDFDTIAASIQRTGRCVVMHEGPRSLGYGAGLAARIQEEMFYQLEAPVLRACGFDTPYPPARLEKLWLPGPDRLLDCVERVLRQP</sequence>
<gene>
    <name type="primary">bkdB</name>
    <name type="synonym">pdhB</name>
    <name type="ordered locus">MT2571</name>
</gene>
<proteinExistence type="inferred from homology"/>
<accession>P9WIS0</accession>
<accession>F2GH62</accession>
<accession>L0T9T3</accession>
<accession>O06160</accession>
<accession>Q7D715</accession>
<reference key="1">
    <citation type="journal article" date="2002" name="J. Bacteriol.">
        <title>Whole-genome comparison of Mycobacterium tuberculosis clinical and laboratory strains.</title>
        <authorList>
            <person name="Fleischmann R.D."/>
            <person name="Alland D."/>
            <person name="Eisen J.A."/>
            <person name="Carpenter L."/>
            <person name="White O."/>
            <person name="Peterson J.D."/>
            <person name="DeBoy R.T."/>
            <person name="Dodson R.J."/>
            <person name="Gwinn M.L."/>
            <person name="Haft D.H."/>
            <person name="Hickey E.K."/>
            <person name="Kolonay J.F."/>
            <person name="Nelson W.C."/>
            <person name="Umayam L.A."/>
            <person name="Ermolaeva M.D."/>
            <person name="Salzberg S.L."/>
            <person name="Delcher A."/>
            <person name="Utterback T.R."/>
            <person name="Weidman J.F."/>
            <person name="Khouri H.M."/>
            <person name="Gill J."/>
            <person name="Mikula A."/>
            <person name="Bishai W."/>
            <person name="Jacobs W.R. Jr."/>
            <person name="Venter J.C."/>
            <person name="Fraser C.M."/>
        </authorList>
    </citation>
    <scope>NUCLEOTIDE SEQUENCE [LARGE SCALE GENOMIC DNA]</scope>
    <source>
        <strain>CDC 1551 / Oshkosh</strain>
    </source>
</reference>
<name>BKDB_MYCTO</name>